<accession>P85417</accession>
<reference evidence="1" key="1">
    <citation type="submission" date="2007-12" db="UniProtKB">
        <authorList>
            <person name="Gabaldon C."/>
            <person name="Gomez Ros L.V."/>
            <person name="Novo Uzal E."/>
            <person name="Ros Barcelo A."/>
        </authorList>
    </citation>
    <scope>PROTEIN SEQUENCE</scope>
    <source>
        <strain>cv. Envy</strain>
        <tissue>Callus</tissue>
    </source>
</reference>
<name>UP02_ZINEL</name>
<protein>
    <recommendedName>
        <fullName>Unknown protein 2</fullName>
    </recommendedName>
</protein>
<proteinExistence type="evidence at protein level"/>
<organism>
    <name type="scientific">Zinnia elegans</name>
    <name type="common">Garden zinnia</name>
    <name type="synonym">Zinnia violacea</name>
    <dbReference type="NCBI Taxonomy" id="34245"/>
    <lineage>
        <taxon>Eukaryota</taxon>
        <taxon>Viridiplantae</taxon>
        <taxon>Streptophyta</taxon>
        <taxon>Embryophyta</taxon>
        <taxon>Tracheophyta</taxon>
        <taxon>Spermatophyta</taxon>
        <taxon>Magnoliopsida</taxon>
        <taxon>eudicotyledons</taxon>
        <taxon>Gunneridae</taxon>
        <taxon>Pentapetalae</taxon>
        <taxon>asterids</taxon>
        <taxon>campanulids</taxon>
        <taxon>Asterales</taxon>
        <taxon>Asteraceae</taxon>
        <taxon>Asteroideae</taxon>
        <taxon>Heliantheae alliance</taxon>
        <taxon>Heliantheae</taxon>
        <taxon>Zinnia</taxon>
    </lineage>
</organism>
<feature type="chain" id="PRO_0000318127" description="Unknown protein 2">
    <location>
        <begin position="1" status="less than"/>
        <end position="13" status="greater than"/>
    </location>
</feature>
<feature type="non-terminal residue">
    <location>
        <position position="1"/>
    </location>
</feature>
<feature type="non-terminal residue">
    <location>
        <position position="13"/>
    </location>
</feature>
<keyword id="KW-0903">Direct protein sequencing</keyword>
<sequence length="13" mass="1380">FASSPXXXXVLSK</sequence>
<evidence type="ECO:0000305" key="1"/>